<organism>
    <name type="scientific">Clostridium perfringens (strain ATCC 13124 / DSM 756 / JCM 1290 / NCIMB 6125 / NCTC 8237 / Type A)</name>
    <dbReference type="NCBI Taxonomy" id="195103"/>
    <lineage>
        <taxon>Bacteria</taxon>
        <taxon>Bacillati</taxon>
        <taxon>Bacillota</taxon>
        <taxon>Clostridia</taxon>
        <taxon>Eubacteriales</taxon>
        <taxon>Clostridiaceae</taxon>
        <taxon>Clostridium</taxon>
    </lineage>
</organism>
<comment type="function">
    <text evidence="1">DNA-binding global transcriptional regulator which is involved in the adaptive response to starvation and acts by directly or indirectly controlling the expression of numerous genes in response to nutrient availability. During rapid exponential growth, CodY is highly active and represses genes whose products allow adaptation to nutrient depletion.</text>
</comment>
<comment type="subcellular location">
    <subcellularLocation>
        <location evidence="1">Cytoplasm</location>
    </subcellularLocation>
</comment>
<comment type="similarity">
    <text evidence="1">Belongs to the CodY family.</text>
</comment>
<name>CODY_CLOP1</name>
<protein>
    <recommendedName>
        <fullName evidence="1">Global transcriptional regulator CodY</fullName>
    </recommendedName>
</protein>
<feature type="chain" id="PRO_1000051535" description="Global transcriptional regulator CodY">
    <location>
        <begin position="1"/>
        <end position="258"/>
    </location>
</feature>
<feature type="DNA-binding region" description="H-T-H motif" evidence="1">
    <location>
        <begin position="204"/>
        <end position="223"/>
    </location>
</feature>
<feature type="region of interest" description="GAF domain" evidence="1">
    <location>
        <begin position="1"/>
        <end position="156"/>
    </location>
</feature>
<reference key="1">
    <citation type="journal article" date="2006" name="Genome Res.">
        <title>Skewed genomic variability in strains of the toxigenic bacterial pathogen, Clostridium perfringens.</title>
        <authorList>
            <person name="Myers G.S.A."/>
            <person name="Rasko D.A."/>
            <person name="Cheung J.K."/>
            <person name="Ravel J."/>
            <person name="Seshadri R."/>
            <person name="DeBoy R.T."/>
            <person name="Ren Q."/>
            <person name="Varga J."/>
            <person name="Awad M.M."/>
            <person name="Brinkac L.M."/>
            <person name="Daugherty S.C."/>
            <person name="Haft D.H."/>
            <person name="Dodson R.J."/>
            <person name="Madupu R."/>
            <person name="Nelson W.C."/>
            <person name="Rosovitz M.J."/>
            <person name="Sullivan S.A."/>
            <person name="Khouri H."/>
            <person name="Dimitrov G.I."/>
            <person name="Watkins K.L."/>
            <person name="Mulligan S."/>
            <person name="Benton J."/>
            <person name="Radune D."/>
            <person name="Fisher D.J."/>
            <person name="Atkins H.S."/>
            <person name="Hiscox T."/>
            <person name="Jost B.H."/>
            <person name="Billington S.J."/>
            <person name="Songer J.G."/>
            <person name="McClane B.A."/>
            <person name="Titball R.W."/>
            <person name="Rood J.I."/>
            <person name="Melville S.B."/>
            <person name="Paulsen I.T."/>
        </authorList>
    </citation>
    <scope>NUCLEOTIDE SEQUENCE [LARGE SCALE GENOMIC DNA]</scope>
    <source>
        <strain>ATCC 13124 / DSM 756 / JCM 1290 / NCIMB 6125 / NCTC 8237 / S 107 / Type A</strain>
    </source>
</reference>
<sequence>MSTLLSKTRRLNKILQKSGTEAIAFGDICQLLSDVMSCNVYLVGRKGRILGYSFSEKFECDIMKEKVVVDRKFPEDYNNKLINIQDTIANIPNKGICVFEGVGECLISKKISTIVPIVGNGDRLGTLLLARFGEEFNDDDLVLAEYSATIVGMELLRARQGEIEEEARKKAVVQLAIGTLSYSELEAVEHIFSELNGDEGLLVASKIADKVGITRSVIVNALRKFESAGVIESRSLGMKGTHIKILNEKLMDELKKIK</sequence>
<keyword id="KW-0963">Cytoplasm</keyword>
<keyword id="KW-0238">DNA-binding</keyword>
<keyword id="KW-0678">Repressor</keyword>
<keyword id="KW-0804">Transcription</keyword>
<keyword id="KW-0805">Transcription regulation</keyword>
<evidence type="ECO:0000255" key="1">
    <source>
        <dbReference type="HAMAP-Rule" id="MF_00621"/>
    </source>
</evidence>
<dbReference type="EMBL" id="CP000246">
    <property type="protein sequence ID" value="ABG84835.1"/>
    <property type="molecule type" value="Genomic_DNA"/>
</dbReference>
<dbReference type="RefSeq" id="WP_003449426.1">
    <property type="nucleotide sequence ID" value="NC_008261.1"/>
</dbReference>
<dbReference type="SMR" id="Q0TPQ2"/>
<dbReference type="STRING" id="195103.CPF_1955"/>
<dbReference type="PaxDb" id="195103-CPF_1955"/>
<dbReference type="GeneID" id="93001761"/>
<dbReference type="KEGG" id="cpf:CPF_1955"/>
<dbReference type="eggNOG" id="COG4465">
    <property type="taxonomic scope" value="Bacteria"/>
</dbReference>
<dbReference type="HOGENOM" id="CLU_089581_0_0_9"/>
<dbReference type="Proteomes" id="UP000001823">
    <property type="component" value="Chromosome"/>
</dbReference>
<dbReference type="GO" id="GO:0005737">
    <property type="term" value="C:cytoplasm"/>
    <property type="evidence" value="ECO:0007669"/>
    <property type="project" value="UniProtKB-SubCell"/>
</dbReference>
<dbReference type="GO" id="GO:0003677">
    <property type="term" value="F:DNA binding"/>
    <property type="evidence" value="ECO:0007669"/>
    <property type="project" value="UniProtKB-UniRule"/>
</dbReference>
<dbReference type="GO" id="GO:0003700">
    <property type="term" value="F:DNA-binding transcription factor activity"/>
    <property type="evidence" value="ECO:0007669"/>
    <property type="project" value="InterPro"/>
</dbReference>
<dbReference type="GO" id="GO:0005525">
    <property type="term" value="F:GTP binding"/>
    <property type="evidence" value="ECO:0007669"/>
    <property type="project" value="InterPro"/>
</dbReference>
<dbReference type="GO" id="GO:0045892">
    <property type="term" value="P:negative regulation of DNA-templated transcription"/>
    <property type="evidence" value="ECO:0007669"/>
    <property type="project" value="UniProtKB-UniRule"/>
</dbReference>
<dbReference type="FunFam" id="1.10.10.10:FF:000034">
    <property type="entry name" value="GTP-sensing transcriptional pleiotropic repressor CodY"/>
    <property type="match status" value="1"/>
</dbReference>
<dbReference type="Gene3D" id="3.30.450.40">
    <property type="match status" value="1"/>
</dbReference>
<dbReference type="Gene3D" id="1.10.10.10">
    <property type="entry name" value="Winged helix-like DNA-binding domain superfamily/Winged helix DNA-binding domain"/>
    <property type="match status" value="1"/>
</dbReference>
<dbReference type="HAMAP" id="MF_00621">
    <property type="entry name" value="HTH_type_CodY"/>
    <property type="match status" value="1"/>
</dbReference>
<dbReference type="InterPro" id="IPR014154">
    <property type="entry name" value="CodY"/>
</dbReference>
<dbReference type="InterPro" id="IPR029016">
    <property type="entry name" value="GAF-like_dom_sf"/>
</dbReference>
<dbReference type="InterPro" id="IPR013198">
    <property type="entry name" value="GTP_trans_reg_CodY_C"/>
</dbReference>
<dbReference type="InterPro" id="IPR010312">
    <property type="entry name" value="Transc_reg_CodY_N"/>
</dbReference>
<dbReference type="InterPro" id="IPR036388">
    <property type="entry name" value="WH-like_DNA-bd_sf"/>
</dbReference>
<dbReference type="InterPro" id="IPR036390">
    <property type="entry name" value="WH_DNA-bd_sf"/>
</dbReference>
<dbReference type="NCBIfam" id="TIGR02787">
    <property type="entry name" value="codY_Gpos"/>
    <property type="match status" value="1"/>
</dbReference>
<dbReference type="NCBIfam" id="NF003170">
    <property type="entry name" value="PRK04158.1"/>
    <property type="match status" value="1"/>
</dbReference>
<dbReference type="PANTHER" id="PTHR40062:SF1">
    <property type="entry name" value="GLOBAL TRANSCRIPTIONAL REGULATOR CODY"/>
    <property type="match status" value="1"/>
</dbReference>
<dbReference type="PANTHER" id="PTHR40062">
    <property type="entry name" value="GTP-SENSING TRANSCRIPTIONAL PLEIOTROPIC REPRESSOR CODY"/>
    <property type="match status" value="1"/>
</dbReference>
<dbReference type="Pfam" id="PF06018">
    <property type="entry name" value="CodY"/>
    <property type="match status" value="1"/>
</dbReference>
<dbReference type="Pfam" id="PF08222">
    <property type="entry name" value="HTH_CodY"/>
    <property type="match status" value="1"/>
</dbReference>
<dbReference type="PIRSF" id="PIRSF011572">
    <property type="entry name" value="GTP_sensing_CodY"/>
    <property type="match status" value="1"/>
</dbReference>
<dbReference type="SUPFAM" id="SSF46785">
    <property type="entry name" value="Winged helix' DNA-binding domain"/>
    <property type="match status" value="1"/>
</dbReference>
<accession>Q0TPQ2</accession>
<gene>
    <name evidence="1" type="primary">codY</name>
    <name type="ordered locus">CPF_1955</name>
</gene>
<proteinExistence type="inferred from homology"/>